<dbReference type="EC" id="1.2.1.41" evidence="1"/>
<dbReference type="EMBL" id="AE014133">
    <property type="protein sequence ID" value="AAN58200.1"/>
    <property type="molecule type" value="Genomic_DNA"/>
</dbReference>
<dbReference type="RefSeq" id="NP_720894.1">
    <property type="nucleotide sequence ID" value="NC_004350.2"/>
</dbReference>
<dbReference type="RefSeq" id="WP_002262086.1">
    <property type="nucleotide sequence ID" value="NC_004350.2"/>
</dbReference>
<dbReference type="SMR" id="Q8DVM9"/>
<dbReference type="STRING" id="210007.SMU_450"/>
<dbReference type="KEGG" id="smu:SMU_450"/>
<dbReference type="PATRIC" id="fig|210007.7.peg.396"/>
<dbReference type="eggNOG" id="COG0014">
    <property type="taxonomic scope" value="Bacteria"/>
</dbReference>
<dbReference type="HOGENOM" id="CLU_030231_0_0_9"/>
<dbReference type="OrthoDB" id="9809970at2"/>
<dbReference type="PhylomeDB" id="Q8DVM9"/>
<dbReference type="UniPathway" id="UPA00098">
    <property type="reaction ID" value="UER00360"/>
</dbReference>
<dbReference type="Proteomes" id="UP000002512">
    <property type="component" value="Chromosome"/>
</dbReference>
<dbReference type="GO" id="GO:0005737">
    <property type="term" value="C:cytoplasm"/>
    <property type="evidence" value="ECO:0007669"/>
    <property type="project" value="UniProtKB-SubCell"/>
</dbReference>
<dbReference type="GO" id="GO:0004350">
    <property type="term" value="F:glutamate-5-semialdehyde dehydrogenase activity"/>
    <property type="evidence" value="ECO:0007669"/>
    <property type="project" value="UniProtKB-UniRule"/>
</dbReference>
<dbReference type="GO" id="GO:0050661">
    <property type="term" value="F:NADP binding"/>
    <property type="evidence" value="ECO:0007669"/>
    <property type="project" value="InterPro"/>
</dbReference>
<dbReference type="GO" id="GO:0055129">
    <property type="term" value="P:L-proline biosynthetic process"/>
    <property type="evidence" value="ECO:0007669"/>
    <property type="project" value="UniProtKB-UniRule"/>
</dbReference>
<dbReference type="CDD" id="cd07079">
    <property type="entry name" value="ALDH_F18-19_ProA-GPR"/>
    <property type="match status" value="1"/>
</dbReference>
<dbReference type="FunFam" id="3.40.309.10:FF:000006">
    <property type="entry name" value="Gamma-glutamyl phosphate reductase"/>
    <property type="match status" value="1"/>
</dbReference>
<dbReference type="Gene3D" id="3.40.605.10">
    <property type="entry name" value="Aldehyde Dehydrogenase, Chain A, domain 1"/>
    <property type="match status" value="1"/>
</dbReference>
<dbReference type="Gene3D" id="3.40.309.10">
    <property type="entry name" value="Aldehyde Dehydrogenase, Chain A, domain 2"/>
    <property type="match status" value="1"/>
</dbReference>
<dbReference type="HAMAP" id="MF_00412">
    <property type="entry name" value="ProA"/>
    <property type="match status" value="1"/>
</dbReference>
<dbReference type="InterPro" id="IPR016161">
    <property type="entry name" value="Ald_DH/histidinol_DH"/>
</dbReference>
<dbReference type="InterPro" id="IPR016163">
    <property type="entry name" value="Ald_DH_C"/>
</dbReference>
<dbReference type="InterPro" id="IPR016162">
    <property type="entry name" value="Ald_DH_N"/>
</dbReference>
<dbReference type="InterPro" id="IPR015590">
    <property type="entry name" value="Aldehyde_DH_dom"/>
</dbReference>
<dbReference type="InterPro" id="IPR020593">
    <property type="entry name" value="G-glutamylP_reductase_CS"/>
</dbReference>
<dbReference type="InterPro" id="IPR012134">
    <property type="entry name" value="Glu-5-SA_DH"/>
</dbReference>
<dbReference type="InterPro" id="IPR000965">
    <property type="entry name" value="GPR_dom"/>
</dbReference>
<dbReference type="NCBIfam" id="NF001221">
    <property type="entry name" value="PRK00197.1"/>
    <property type="match status" value="1"/>
</dbReference>
<dbReference type="NCBIfam" id="TIGR00407">
    <property type="entry name" value="proA"/>
    <property type="match status" value="1"/>
</dbReference>
<dbReference type="PANTHER" id="PTHR11063:SF8">
    <property type="entry name" value="DELTA-1-PYRROLINE-5-CARBOXYLATE SYNTHASE"/>
    <property type="match status" value="1"/>
</dbReference>
<dbReference type="PANTHER" id="PTHR11063">
    <property type="entry name" value="GLUTAMATE SEMIALDEHYDE DEHYDROGENASE"/>
    <property type="match status" value="1"/>
</dbReference>
<dbReference type="Pfam" id="PF00171">
    <property type="entry name" value="Aldedh"/>
    <property type="match status" value="2"/>
</dbReference>
<dbReference type="PIRSF" id="PIRSF000151">
    <property type="entry name" value="GPR"/>
    <property type="match status" value="1"/>
</dbReference>
<dbReference type="SUPFAM" id="SSF53720">
    <property type="entry name" value="ALDH-like"/>
    <property type="match status" value="1"/>
</dbReference>
<dbReference type="PROSITE" id="PS01223">
    <property type="entry name" value="PROA"/>
    <property type="match status" value="1"/>
</dbReference>
<sequence>MAIIDNLGQNAKKASFLLAQLGTEAKNTALLKVAEALLAELPYILEENAKDVALAQEHGISAIMVDRLRLDEKRLQDIASGVRDVAALGDPIGQVVRGYTNMVGLKIIQKRVPLGVIAMIFESRPNVSVDAFSLAFKTGNAIILRGGRDAICSNTALVNVIRRTLASFGLDENAVQLVEDTSHEVAKELMAAVDYVDVLIPRGGARLIQTVKKEAKVPVIETGVGNVHIYVDEFADLDMASKIVVNAKTQRPSVCNAAEGLLVHEKVASDFLPKLEAAINQIHPVEFRADDRAQKILKNAQPASQEDYATEFLDYIISVKIVNSLGEAIDWINTYTSHHSESIITRDIQAAERFQDEVDAAAVYVNASTRFTDGFVFGLGAEIGISTQKLHARGPMGLEALTSTKFYINGKGQIRE</sequence>
<feature type="chain" id="PRO_0000189787" description="Gamma-glutamyl phosphate reductase">
    <location>
        <begin position="1"/>
        <end position="416"/>
    </location>
</feature>
<protein>
    <recommendedName>
        <fullName evidence="1">Gamma-glutamyl phosphate reductase</fullName>
        <shortName evidence="1">GPR</shortName>
        <ecNumber evidence="1">1.2.1.41</ecNumber>
    </recommendedName>
    <alternativeName>
        <fullName evidence="1">Glutamate-5-semialdehyde dehydrogenase</fullName>
    </alternativeName>
    <alternativeName>
        <fullName evidence="1">Glutamyl-gamma-semialdehyde dehydrogenase</fullName>
        <shortName evidence="1">GSA dehydrogenase</shortName>
    </alternativeName>
</protein>
<comment type="function">
    <text evidence="1">Catalyzes the NADPH-dependent reduction of L-glutamate 5-phosphate into L-glutamate 5-semialdehyde and phosphate. The product spontaneously undergoes cyclization to form 1-pyrroline-5-carboxylate.</text>
</comment>
<comment type="catalytic activity">
    <reaction evidence="1">
        <text>L-glutamate 5-semialdehyde + phosphate + NADP(+) = L-glutamyl 5-phosphate + NADPH + H(+)</text>
        <dbReference type="Rhea" id="RHEA:19541"/>
        <dbReference type="ChEBI" id="CHEBI:15378"/>
        <dbReference type="ChEBI" id="CHEBI:43474"/>
        <dbReference type="ChEBI" id="CHEBI:57783"/>
        <dbReference type="ChEBI" id="CHEBI:58066"/>
        <dbReference type="ChEBI" id="CHEBI:58274"/>
        <dbReference type="ChEBI" id="CHEBI:58349"/>
        <dbReference type="EC" id="1.2.1.41"/>
    </reaction>
</comment>
<comment type="pathway">
    <text evidence="1">Amino-acid biosynthesis; L-proline biosynthesis; L-glutamate 5-semialdehyde from L-glutamate: step 2/2.</text>
</comment>
<comment type="subcellular location">
    <subcellularLocation>
        <location evidence="1">Cytoplasm</location>
    </subcellularLocation>
</comment>
<comment type="similarity">
    <text evidence="1">Belongs to the gamma-glutamyl phosphate reductase family.</text>
</comment>
<reference key="1">
    <citation type="journal article" date="2002" name="Proc. Natl. Acad. Sci. U.S.A.">
        <title>Genome sequence of Streptococcus mutans UA159, a cariogenic dental pathogen.</title>
        <authorList>
            <person name="Ajdic D.J."/>
            <person name="McShan W.M."/>
            <person name="McLaughlin R.E."/>
            <person name="Savic G."/>
            <person name="Chang J."/>
            <person name="Carson M.B."/>
            <person name="Primeaux C."/>
            <person name="Tian R."/>
            <person name="Kenton S."/>
            <person name="Jia H.G."/>
            <person name="Lin S.P."/>
            <person name="Qian Y."/>
            <person name="Li S."/>
            <person name="Zhu H."/>
            <person name="Najar F.Z."/>
            <person name="Lai H."/>
            <person name="White J."/>
            <person name="Roe B.A."/>
            <person name="Ferretti J.J."/>
        </authorList>
    </citation>
    <scope>NUCLEOTIDE SEQUENCE [LARGE SCALE GENOMIC DNA]</scope>
    <source>
        <strain>ATCC 700610 / UA159</strain>
    </source>
</reference>
<keyword id="KW-0028">Amino-acid biosynthesis</keyword>
<keyword id="KW-0963">Cytoplasm</keyword>
<keyword id="KW-0521">NADP</keyword>
<keyword id="KW-0560">Oxidoreductase</keyword>
<keyword id="KW-0641">Proline biosynthesis</keyword>
<keyword id="KW-1185">Reference proteome</keyword>
<gene>
    <name evidence="1" type="primary">proA</name>
    <name type="ordered locus">SMU_450</name>
</gene>
<accession>Q8DVM9</accession>
<proteinExistence type="inferred from homology"/>
<organism>
    <name type="scientific">Streptococcus mutans serotype c (strain ATCC 700610 / UA159)</name>
    <dbReference type="NCBI Taxonomy" id="210007"/>
    <lineage>
        <taxon>Bacteria</taxon>
        <taxon>Bacillati</taxon>
        <taxon>Bacillota</taxon>
        <taxon>Bacilli</taxon>
        <taxon>Lactobacillales</taxon>
        <taxon>Streptococcaceae</taxon>
        <taxon>Streptococcus</taxon>
    </lineage>
</organism>
<name>PROA_STRMU</name>
<evidence type="ECO:0000255" key="1">
    <source>
        <dbReference type="HAMAP-Rule" id="MF_00412"/>
    </source>
</evidence>